<comment type="function">
    <text evidence="5">Involved in the synthesis of fatty acids (PubMed:17222186). Elongates C20 polyunsaturated fatty acids (PUFAs) with a preference for n-6 PUFAs (PubMed:17222186).</text>
</comment>
<comment type="catalytic activity">
    <reaction evidence="2">
        <text>an acyl-CoA + malonyl-CoA + H(+) = a 3-oxoacyl-CoA + CO2 + CoA</text>
        <dbReference type="Rhea" id="RHEA:50252"/>
        <dbReference type="ChEBI" id="CHEBI:15378"/>
        <dbReference type="ChEBI" id="CHEBI:16526"/>
        <dbReference type="ChEBI" id="CHEBI:57287"/>
        <dbReference type="ChEBI" id="CHEBI:57384"/>
        <dbReference type="ChEBI" id="CHEBI:58342"/>
        <dbReference type="ChEBI" id="CHEBI:90726"/>
    </reaction>
    <physiologicalReaction direction="left-to-right" evidence="2">
        <dbReference type="Rhea" id="RHEA:50253"/>
    </physiologicalReaction>
</comment>
<comment type="pathway">
    <text evidence="7">Lipid metabolism; polyunsaturated fatty acid biosynthesis.</text>
</comment>
<comment type="subcellular location">
    <subcellularLocation>
        <location evidence="3">Membrane</location>
        <topology evidence="3">Multi-pass membrane protein</topology>
    </subcellularLocation>
</comment>
<comment type="similarity">
    <text evidence="4">Belongs to the ELO family.</text>
</comment>
<accession>Q4D321</accession>
<protein>
    <recommendedName>
        <fullName evidence="6">Fatty acid elongase 5</fullName>
        <ecNumber evidence="2">2.3.1.-</ecNumber>
    </recommendedName>
    <alternativeName>
        <fullName evidence="4">Elongation of fatty acids protein</fullName>
    </alternativeName>
    <alternativeName>
        <fullName evidence="6">PUFA Delta5 elongase</fullName>
    </alternativeName>
</protein>
<organism evidence="9">
    <name type="scientific">Trypanosoma cruzi (strain CL Brener)</name>
    <dbReference type="NCBI Taxonomy" id="353153"/>
    <lineage>
        <taxon>Eukaryota</taxon>
        <taxon>Discoba</taxon>
        <taxon>Euglenozoa</taxon>
        <taxon>Kinetoplastea</taxon>
        <taxon>Metakinetoplastina</taxon>
        <taxon>Trypanosomatida</taxon>
        <taxon>Trypanosomatidae</taxon>
        <taxon>Trypanosoma</taxon>
        <taxon>Schizotrypanum</taxon>
    </lineage>
</organism>
<gene>
    <name evidence="6" type="primary">ELO5</name>
    <name evidence="8" type="ORF">Tc00.1047053509539.30</name>
</gene>
<proteinExistence type="inferred from homology"/>
<keyword id="KW-0275">Fatty acid biosynthesis</keyword>
<keyword id="KW-0276">Fatty acid metabolism</keyword>
<keyword id="KW-0444">Lipid biosynthesis</keyword>
<keyword id="KW-0443">Lipid metabolism</keyword>
<keyword id="KW-0472">Membrane</keyword>
<keyword id="KW-1185">Reference proteome</keyword>
<keyword id="KW-0808">Transferase</keyword>
<keyword id="KW-0812">Transmembrane</keyword>
<keyword id="KW-1133">Transmembrane helix</keyword>
<sequence length="253" mass="29660">MEVYLDATECYLKNSLCFYPSLNIFVSWSVLVGAHVGYIVLVIILRKWMQRRAALNMNKIMMIYNVTQIYISAIMAISLAPHLKKGLFNLNGRFSANIEFWIFVHYCSKFLDMFDTVLMIFRKKNEQLSFLHIYHHATIGFIWGLLLRNGIGNGTAFFGAWVNSAVHFLMYSHYLWTSLGFRNPLKSILTKIQMFQFFLCIVQASLAPFFDNQFALQWSFLQLTYHITLFILFLDFHRKSGKKKGLRNLKQTE</sequence>
<dbReference type="EC" id="2.3.1.-" evidence="2"/>
<dbReference type="EMBL" id="AAHK01001121">
    <property type="protein sequence ID" value="EAN86919.1"/>
    <property type="molecule type" value="Genomic_DNA"/>
</dbReference>
<dbReference type="RefSeq" id="XP_808770.1">
    <property type="nucleotide sequence ID" value="XM_803677.1"/>
</dbReference>
<dbReference type="SMR" id="Q4D321"/>
<dbReference type="STRING" id="353153.Q4D321"/>
<dbReference type="PaxDb" id="353153-Q4D321"/>
<dbReference type="EnsemblProtists" id="EAN86919">
    <property type="protein sequence ID" value="EAN86919"/>
    <property type="gene ID" value="Tc00.1047053509539.30"/>
</dbReference>
<dbReference type="GeneID" id="3539266"/>
<dbReference type="KEGG" id="tcr:509539.30"/>
<dbReference type="eggNOG" id="KOG3071">
    <property type="taxonomic scope" value="Eukaryota"/>
</dbReference>
<dbReference type="InParanoid" id="Q4D321"/>
<dbReference type="OMA" id="AMEVVTH"/>
<dbReference type="UniPathway" id="UPA00658"/>
<dbReference type="Proteomes" id="UP000002296">
    <property type="component" value="Unassembled WGS sequence"/>
</dbReference>
<dbReference type="GO" id="GO:0005789">
    <property type="term" value="C:endoplasmic reticulum membrane"/>
    <property type="evidence" value="ECO:0007669"/>
    <property type="project" value="TreeGrafter"/>
</dbReference>
<dbReference type="GO" id="GO:0009922">
    <property type="term" value="F:fatty acid elongase activity"/>
    <property type="evidence" value="ECO:0007669"/>
    <property type="project" value="UniProtKB-EC"/>
</dbReference>
<dbReference type="GO" id="GO:0034625">
    <property type="term" value="P:fatty acid elongation, monounsaturated fatty acid"/>
    <property type="evidence" value="ECO:0007669"/>
    <property type="project" value="TreeGrafter"/>
</dbReference>
<dbReference type="GO" id="GO:0034626">
    <property type="term" value="P:fatty acid elongation, polyunsaturated fatty acid"/>
    <property type="evidence" value="ECO:0007669"/>
    <property type="project" value="TreeGrafter"/>
</dbReference>
<dbReference type="GO" id="GO:0019367">
    <property type="term" value="P:fatty acid elongation, saturated fatty acid"/>
    <property type="evidence" value="ECO:0007669"/>
    <property type="project" value="TreeGrafter"/>
</dbReference>
<dbReference type="GO" id="GO:0030148">
    <property type="term" value="P:sphingolipid biosynthetic process"/>
    <property type="evidence" value="ECO:0007669"/>
    <property type="project" value="TreeGrafter"/>
</dbReference>
<dbReference type="GO" id="GO:0006636">
    <property type="term" value="P:unsaturated fatty acid biosynthetic process"/>
    <property type="evidence" value="ECO:0007669"/>
    <property type="project" value="UniProtKB-UniPathway"/>
</dbReference>
<dbReference type="GO" id="GO:0042761">
    <property type="term" value="P:very long-chain fatty acid biosynthetic process"/>
    <property type="evidence" value="ECO:0007669"/>
    <property type="project" value="TreeGrafter"/>
</dbReference>
<dbReference type="InterPro" id="IPR002076">
    <property type="entry name" value="ELO_fam"/>
</dbReference>
<dbReference type="PANTHER" id="PTHR11157:SF133">
    <property type="entry name" value="ELONGATION OF FATTY ACIDS PROTEIN"/>
    <property type="match status" value="1"/>
</dbReference>
<dbReference type="PANTHER" id="PTHR11157">
    <property type="entry name" value="FATTY ACID ACYL TRANSFERASE-RELATED"/>
    <property type="match status" value="1"/>
</dbReference>
<dbReference type="Pfam" id="PF01151">
    <property type="entry name" value="ELO"/>
    <property type="match status" value="1"/>
</dbReference>
<evidence type="ECO:0000250" key="1">
    <source>
        <dbReference type="UniProtKB" id="A1L3X0"/>
    </source>
</evidence>
<evidence type="ECO:0000250" key="2">
    <source>
        <dbReference type="UniProtKB" id="Q57X51"/>
    </source>
</evidence>
<evidence type="ECO:0000255" key="3"/>
<evidence type="ECO:0000255" key="4">
    <source>
        <dbReference type="RuleBase" id="RU361115"/>
    </source>
</evidence>
<evidence type="ECO:0000269" key="5">
    <source>
    </source>
</evidence>
<evidence type="ECO:0000303" key="6">
    <source>
    </source>
</evidence>
<evidence type="ECO:0000305" key="7"/>
<evidence type="ECO:0000312" key="8">
    <source>
        <dbReference type="EMBL" id="EAN86919.1"/>
    </source>
</evidence>
<evidence type="ECO:0000312" key="9">
    <source>
        <dbReference type="Proteomes" id="UP000002296"/>
    </source>
</evidence>
<reference evidence="9" key="1">
    <citation type="journal article" date="2005" name="Science">
        <title>The genome sequence of Trypanosoma cruzi, etiologic agent of Chagas disease.</title>
        <authorList>
            <person name="El-Sayed N.M.A."/>
            <person name="Myler P.J."/>
            <person name="Bartholomeu D.C."/>
            <person name="Nilsson D."/>
            <person name="Aggarwal G."/>
            <person name="Tran A.-N."/>
            <person name="Ghedin E."/>
            <person name="Worthey E.A."/>
            <person name="Delcher A.L."/>
            <person name="Blandin G."/>
            <person name="Westenberger S.J."/>
            <person name="Caler E."/>
            <person name="Cerqueira G.C."/>
            <person name="Branche C."/>
            <person name="Haas B."/>
            <person name="Anupama A."/>
            <person name="Arner E."/>
            <person name="Aslund L."/>
            <person name="Attipoe P."/>
            <person name="Bontempi E."/>
            <person name="Bringaud F."/>
            <person name="Burton P."/>
            <person name="Cadag E."/>
            <person name="Campbell D.A."/>
            <person name="Carrington M."/>
            <person name="Crabtree J."/>
            <person name="Darban H."/>
            <person name="da Silveira J.F."/>
            <person name="de Jong P."/>
            <person name="Edwards K."/>
            <person name="Englund P.T."/>
            <person name="Fazelina G."/>
            <person name="Feldblyum T."/>
            <person name="Ferella M."/>
            <person name="Frasch A.C."/>
            <person name="Gull K."/>
            <person name="Horn D."/>
            <person name="Hou L."/>
            <person name="Huang Y."/>
            <person name="Kindlund E."/>
            <person name="Klingbeil M."/>
            <person name="Kluge S."/>
            <person name="Koo H."/>
            <person name="Lacerda D."/>
            <person name="Levin M.J."/>
            <person name="Lorenzi H."/>
            <person name="Louie T."/>
            <person name="Machado C.R."/>
            <person name="McCulloch R."/>
            <person name="McKenna A."/>
            <person name="Mizuno Y."/>
            <person name="Mottram J.C."/>
            <person name="Nelson S."/>
            <person name="Ochaya S."/>
            <person name="Osoegawa K."/>
            <person name="Pai G."/>
            <person name="Parsons M."/>
            <person name="Pentony M."/>
            <person name="Pettersson U."/>
            <person name="Pop M."/>
            <person name="Ramirez J.L."/>
            <person name="Rinta J."/>
            <person name="Robertson L."/>
            <person name="Salzberg S.L."/>
            <person name="Sanchez D.O."/>
            <person name="Seyler A."/>
            <person name="Sharma R."/>
            <person name="Shetty J."/>
            <person name="Simpson A.J."/>
            <person name="Sisk E."/>
            <person name="Tammi M.T."/>
            <person name="Tarleton R."/>
            <person name="Teixeira S."/>
            <person name="Van Aken S."/>
            <person name="Vogt C."/>
            <person name="Ward P.N."/>
            <person name="Wickstead B."/>
            <person name="Wortman J."/>
            <person name="White O."/>
            <person name="Fraser C.M."/>
            <person name="Stuart K.D."/>
            <person name="Andersson B."/>
        </authorList>
    </citation>
    <scope>NUCLEOTIDE SEQUENCE [LARGE SCALE GENOMIC DNA]</scope>
    <source>
        <strain evidence="9">CL Brener</strain>
    </source>
</reference>
<reference evidence="7" key="2">
    <citation type="journal article" date="2007" name="FEBS J.">
        <title>Elongation of polyunsaturated fatty acids in trypanosomatids.</title>
        <authorList>
            <person name="Livore V.I."/>
            <person name="Tripodi K.E."/>
            <person name="Uttaro A.D."/>
        </authorList>
    </citation>
    <scope>FUNCTION</scope>
    <scope>SUBSTRATE SPECIFICITY</scope>
</reference>
<name>ELO5_TRYCC</name>
<feature type="chain" id="PRO_0000459373" description="Fatty acid elongase 5">
    <location>
        <begin position="1"/>
        <end position="253"/>
    </location>
</feature>
<feature type="transmembrane region" description="Helical" evidence="3">
    <location>
        <begin position="24"/>
        <end position="44"/>
    </location>
</feature>
<feature type="transmembrane region" description="Helical" evidence="3">
    <location>
        <begin position="60"/>
        <end position="80"/>
    </location>
</feature>
<feature type="transmembrane region" description="Helical" evidence="3">
    <location>
        <begin position="100"/>
        <end position="120"/>
    </location>
</feature>
<feature type="transmembrane region" description="Helical" evidence="3">
    <location>
        <begin position="127"/>
        <end position="147"/>
    </location>
</feature>
<feature type="transmembrane region" description="Helical" evidence="3">
    <location>
        <begin position="150"/>
        <end position="170"/>
    </location>
</feature>
<feature type="transmembrane region" description="Helical" evidence="3">
    <location>
        <begin position="188"/>
        <end position="208"/>
    </location>
</feature>
<feature type="transmembrane region" description="Helical" evidence="3">
    <location>
        <begin position="214"/>
        <end position="234"/>
    </location>
</feature>
<feature type="short sequence motif" description="HxxHH motif" evidence="6">
    <location>
        <begin position="132"/>
        <end position="136"/>
    </location>
</feature>
<feature type="active site" description="Nucleophile" evidence="1">
    <location>
        <position position="135"/>
    </location>
</feature>